<evidence type="ECO:0000255" key="1">
    <source>
        <dbReference type="HAMAP-Rule" id="MF_01325"/>
    </source>
</evidence>
<evidence type="ECO:0000256" key="2">
    <source>
        <dbReference type="SAM" id="MobiDB-lite"/>
    </source>
</evidence>
<evidence type="ECO:0000305" key="3"/>
<protein>
    <recommendedName>
        <fullName evidence="1">Large ribosomal subunit protein uL3</fullName>
    </recommendedName>
    <alternativeName>
        <fullName evidence="3">50S ribosomal protein L3</fullName>
    </alternativeName>
</protein>
<accession>C3MQ59</accession>
<comment type="function">
    <text evidence="1">One of the primary rRNA binding proteins, it binds directly near the 3'-end of the 23S rRNA, where it nucleates assembly of the 50S subunit.</text>
</comment>
<comment type="subunit">
    <text evidence="1">Part of the 50S ribosomal subunit. Forms a cluster with proteins L14 and L24e.</text>
</comment>
<comment type="similarity">
    <text evidence="1">Belongs to the universal ribosomal protein uL3 family.</text>
</comment>
<organism>
    <name type="scientific">Saccharolobus islandicus (strain L.S.2.15 / Lassen #1)</name>
    <name type="common">Sulfolobus islandicus</name>
    <dbReference type="NCBI Taxonomy" id="429572"/>
    <lineage>
        <taxon>Archaea</taxon>
        <taxon>Thermoproteota</taxon>
        <taxon>Thermoprotei</taxon>
        <taxon>Sulfolobales</taxon>
        <taxon>Sulfolobaceae</taxon>
        <taxon>Saccharolobus</taxon>
    </lineage>
</organism>
<name>RL3_SACI2</name>
<gene>
    <name evidence="1" type="primary">rpl3</name>
    <name type="ordered locus">LS215_1515</name>
</gene>
<reference key="1">
    <citation type="journal article" date="2009" name="Proc. Natl. Acad. Sci. U.S.A.">
        <title>Biogeography of the Sulfolobus islandicus pan-genome.</title>
        <authorList>
            <person name="Reno M.L."/>
            <person name="Held N.L."/>
            <person name="Fields C.J."/>
            <person name="Burke P.V."/>
            <person name="Whitaker R.J."/>
        </authorList>
    </citation>
    <scope>NUCLEOTIDE SEQUENCE [LARGE SCALE GENOMIC DNA]</scope>
    <source>
        <strain>L.S.2.15 / Lassen #1</strain>
    </source>
</reference>
<sequence length="351" mass="39423">MGHRKLASPRRGSAGLRPRKRSSELLPTPRTWPQINSPNPKLLGFVGYKVGMSHVFMIDDWPNSPTNGKEIYMPVTVLEVPPIIPLALRAYAVDGKGEPNVITEYWSPSSLQFLDITRRIHSLSSFLKNDESKKKFEEKFGSKLDLIKSNLDRIVYFRLLVATQPRKIPSLGKKVPDLVEIQIGGGEKKAQLDYALNVLGKEISIKDVFKEGQLIDVVGVTKGKGFAGVIKRYSVVELPRWHKHRKGSRKIGTRGPSLGTPSYTPQPGQLGFHRRTEYNKRIIKIGDDPKEINPAGGFVRYGIVRNTYILLEGSILGSKKRPIFLREAVRPSYVFENAPKITYVNLLSKQG</sequence>
<keyword id="KW-0687">Ribonucleoprotein</keyword>
<keyword id="KW-0689">Ribosomal protein</keyword>
<keyword id="KW-0694">RNA-binding</keyword>
<keyword id="KW-0699">rRNA-binding</keyword>
<proteinExistence type="inferred from homology"/>
<dbReference type="EMBL" id="CP001399">
    <property type="protein sequence ID" value="ACP35522.1"/>
    <property type="molecule type" value="Genomic_DNA"/>
</dbReference>
<dbReference type="RefSeq" id="WP_012713734.1">
    <property type="nucleotide sequence ID" value="NC_012589.1"/>
</dbReference>
<dbReference type="SMR" id="C3MQ59"/>
<dbReference type="GeneID" id="7806002"/>
<dbReference type="KEGG" id="sis:LS215_1515"/>
<dbReference type="HOGENOM" id="CLU_033361_2_0_2"/>
<dbReference type="OrthoDB" id="6121at2157"/>
<dbReference type="Proteomes" id="UP000001747">
    <property type="component" value="Chromosome"/>
</dbReference>
<dbReference type="GO" id="GO:0022625">
    <property type="term" value="C:cytosolic large ribosomal subunit"/>
    <property type="evidence" value="ECO:0007669"/>
    <property type="project" value="TreeGrafter"/>
</dbReference>
<dbReference type="GO" id="GO:0019843">
    <property type="term" value="F:rRNA binding"/>
    <property type="evidence" value="ECO:0007669"/>
    <property type="project" value="UniProtKB-UniRule"/>
</dbReference>
<dbReference type="GO" id="GO:0003735">
    <property type="term" value="F:structural constituent of ribosome"/>
    <property type="evidence" value="ECO:0007669"/>
    <property type="project" value="InterPro"/>
</dbReference>
<dbReference type="GO" id="GO:0006412">
    <property type="term" value="P:translation"/>
    <property type="evidence" value="ECO:0007669"/>
    <property type="project" value="UniProtKB-UniRule"/>
</dbReference>
<dbReference type="Gene3D" id="3.30.1430.10">
    <property type="match status" value="1"/>
</dbReference>
<dbReference type="Gene3D" id="4.10.960.10">
    <property type="entry name" value="Ribosomal protein L3, domain 3"/>
    <property type="match status" value="1"/>
</dbReference>
<dbReference type="Gene3D" id="2.40.30.10">
    <property type="entry name" value="Translation factors"/>
    <property type="match status" value="1"/>
</dbReference>
<dbReference type="HAMAP" id="MF_01325_A">
    <property type="entry name" value="Ribosomal_uL3_A"/>
    <property type="match status" value="1"/>
</dbReference>
<dbReference type="InterPro" id="IPR045077">
    <property type="entry name" value="L3_arc_euk"/>
</dbReference>
<dbReference type="InterPro" id="IPR044892">
    <property type="entry name" value="Ribosomal_L3_dom_3_arc_sf"/>
</dbReference>
<dbReference type="InterPro" id="IPR000597">
    <property type="entry name" value="Ribosomal_uL3"/>
</dbReference>
<dbReference type="InterPro" id="IPR019928">
    <property type="entry name" value="Ribosomal_uL3_arc"/>
</dbReference>
<dbReference type="InterPro" id="IPR019926">
    <property type="entry name" value="Ribosomal_uL3_CS"/>
</dbReference>
<dbReference type="InterPro" id="IPR009000">
    <property type="entry name" value="Transl_B-barrel_sf"/>
</dbReference>
<dbReference type="NCBIfam" id="TIGR03626">
    <property type="entry name" value="L3_arch"/>
    <property type="match status" value="1"/>
</dbReference>
<dbReference type="NCBIfam" id="NF003261">
    <property type="entry name" value="PRK04231.1"/>
    <property type="match status" value="1"/>
</dbReference>
<dbReference type="PANTHER" id="PTHR11363">
    <property type="entry name" value="60S RIBOSOMAL PROTEIN L3-RELATED"/>
    <property type="match status" value="1"/>
</dbReference>
<dbReference type="PANTHER" id="PTHR11363:SF5">
    <property type="entry name" value="LARGE RIBOSOMAL SUBUNIT PROTEIN UL3"/>
    <property type="match status" value="1"/>
</dbReference>
<dbReference type="Pfam" id="PF00297">
    <property type="entry name" value="Ribosomal_L3"/>
    <property type="match status" value="1"/>
</dbReference>
<dbReference type="SUPFAM" id="SSF50447">
    <property type="entry name" value="Translation proteins"/>
    <property type="match status" value="1"/>
</dbReference>
<dbReference type="PROSITE" id="PS00474">
    <property type="entry name" value="RIBOSOMAL_L3"/>
    <property type="match status" value="1"/>
</dbReference>
<feature type="chain" id="PRO_1000214523" description="Large ribosomal subunit protein uL3">
    <location>
        <begin position="1"/>
        <end position="351"/>
    </location>
</feature>
<feature type="region of interest" description="Disordered" evidence="2">
    <location>
        <begin position="1"/>
        <end position="31"/>
    </location>
</feature>
<feature type="region of interest" description="Disordered" evidence="2">
    <location>
        <begin position="246"/>
        <end position="271"/>
    </location>
</feature>